<reference key="1">
    <citation type="journal article" date="2011" name="Environ. Microbiol.">
        <title>Genome of alkaliphilic Bacillus pseudofirmus OF4 reveals adaptations that support the ability to grow in an external pH range from 7.5 to 11.4.</title>
        <authorList>
            <person name="Janto B."/>
            <person name="Ahmed A."/>
            <person name="Ito M."/>
            <person name="Liu J."/>
            <person name="Hicks D.B."/>
            <person name="Pagni S."/>
            <person name="Fackelmayer O.J."/>
            <person name="Smith T.A."/>
            <person name="Earl J."/>
            <person name="Elbourne L.D."/>
            <person name="Hassan K."/>
            <person name="Paulsen I.T."/>
            <person name="Kolsto A.B."/>
            <person name="Tourasse N.J."/>
            <person name="Ehrlich G.D."/>
            <person name="Boissy R."/>
            <person name="Ivey D.M."/>
            <person name="Li G."/>
            <person name="Xue Y."/>
            <person name="Ma Y."/>
            <person name="Hu F.Z."/>
            <person name="Krulwich T.A."/>
        </authorList>
    </citation>
    <scope>NUCLEOTIDE SEQUENCE [LARGE SCALE GENOMIC DNA]</scope>
    <source>
        <strain>ATCC BAA-2126 / JCM 17055 / OF4</strain>
    </source>
</reference>
<reference key="2">
    <citation type="journal article" date="1999" name="Extremophiles">
        <title>Sequence analysis and functional studies of a chromosomal region of alkaliphilic Bacillus firmus OF4 encoding an ABC-type transporter with similarity of sequence and Na+ exclusion capacity to the Bacillus subtilis NatAB transporter.</title>
        <authorList>
            <person name="Wei Y."/>
            <person name="Guffanti A.A."/>
            <person name="Krulwich T.A."/>
        </authorList>
    </citation>
    <scope>NUCLEOTIDE SEQUENCE [GENOMIC DNA] OF 1-108</scope>
</reference>
<organism>
    <name type="scientific">Alkalihalophilus pseudofirmus (strain ATCC BAA-2126 / JCM 17055 / OF4)</name>
    <name type="common">Bacillus pseudofirmus</name>
    <dbReference type="NCBI Taxonomy" id="398511"/>
    <lineage>
        <taxon>Bacteria</taxon>
        <taxon>Bacillati</taxon>
        <taxon>Bacillota</taxon>
        <taxon>Bacilli</taxon>
        <taxon>Bacillales</taxon>
        <taxon>Bacillaceae</taxon>
        <taxon>Alkalihalophilus</taxon>
    </lineage>
</organism>
<feature type="signal peptide" evidence="1">
    <location>
        <begin position="1"/>
        <end position="19"/>
    </location>
</feature>
<feature type="chain" id="PRO_0000020377" description="Membrane protein insertase YidC">
    <location>
        <begin position="20"/>
        <end position="252"/>
    </location>
</feature>
<feature type="transmembrane region" description="Helical" evidence="1">
    <location>
        <begin position="34"/>
        <end position="54"/>
    </location>
</feature>
<feature type="transmembrane region" description="Helical" evidence="1">
    <location>
        <begin position="58"/>
        <end position="78"/>
    </location>
</feature>
<feature type="transmembrane region" description="Helical" evidence="1">
    <location>
        <begin position="131"/>
        <end position="151"/>
    </location>
</feature>
<feature type="transmembrane region" description="Helical" evidence="1">
    <location>
        <begin position="162"/>
        <end position="182"/>
    </location>
</feature>
<feature type="transmembrane region" description="Helical" evidence="1">
    <location>
        <begin position="201"/>
        <end position="221"/>
    </location>
</feature>
<feature type="transmembrane region" description="Helical" evidence="1">
    <location>
        <begin position="223"/>
        <end position="243"/>
    </location>
</feature>
<feature type="lipid moiety-binding region" description="N-palmitoyl cysteine" evidence="1">
    <location>
        <position position="20"/>
    </location>
</feature>
<feature type="lipid moiety-binding region" description="S-diacylglycerol cysteine" evidence="1">
    <location>
        <position position="20"/>
    </location>
</feature>
<gene>
    <name evidence="1" type="primary">yidC</name>
    <name type="ordered locus">BpOF4_11410</name>
</gene>
<accession>O87567</accession>
<accession>D3FVD4</accession>
<proteinExistence type="inferred from homology"/>
<comment type="function">
    <text evidence="1">Required for the insertion and/or proper folding and/or complex formation of integral membrane proteins into the membrane. Involved in integration of membrane proteins that insert both dependently and independently of the Sec translocase complex, as well as at least some lipoproteins.</text>
</comment>
<comment type="subcellular location">
    <subcellularLocation>
        <location evidence="1">Cell membrane</location>
        <topology evidence="1">Multi-pass membrane protein</topology>
    </subcellularLocation>
</comment>
<comment type="similarity">
    <text evidence="1">Belongs to the OXA1/ALB3/YidC family. Type 2 subfamily.</text>
</comment>
<evidence type="ECO:0000255" key="1">
    <source>
        <dbReference type="HAMAP-Rule" id="MF_01811"/>
    </source>
</evidence>
<keyword id="KW-1003">Cell membrane</keyword>
<keyword id="KW-0143">Chaperone</keyword>
<keyword id="KW-0449">Lipoprotein</keyword>
<keyword id="KW-0472">Membrane</keyword>
<keyword id="KW-0564">Palmitate</keyword>
<keyword id="KW-0653">Protein transport</keyword>
<keyword id="KW-1185">Reference proteome</keyword>
<keyword id="KW-0732">Signal</keyword>
<keyword id="KW-0812">Transmembrane</keyword>
<keyword id="KW-1133">Transmembrane helix</keyword>
<keyword id="KW-0813">Transport</keyword>
<protein>
    <recommendedName>
        <fullName evidence="1">Membrane protein insertase YidC</fullName>
    </recommendedName>
    <alternativeName>
        <fullName evidence="1">Foldase YidC</fullName>
    </alternativeName>
    <alternativeName>
        <fullName evidence="1">Membrane integrase YidC</fullName>
    </alternativeName>
    <alternativeName>
        <fullName evidence="1">Membrane protein YidC</fullName>
    </alternativeName>
</protein>
<name>YIDC_ALKPO</name>
<sequence length="252" mass="28361">MKKVLWIIIIILMVGALAGCGANGQPITAETEGIWNHFFVYPLSWVLISVADLLNGSFGLSIIVVTIGIRLFLLPLMIKQQKSSRAMQALRPEMEALQKKYGQGTKRDPKDQQKMQKELMALYKDSGVNPMAGCLPLFIQLPVMMAFYFAIMRTEVIALHSFLWFDLGSPDPLYILPVVAGITTFLQVKMTSFQLNDQMKVIIYIMPVMIVVAGVTLPSALSLYWVVGNLFMIIQTYFTVVRFEQLKTDISK</sequence>
<dbReference type="EMBL" id="CP001878">
    <property type="protein sequence ID" value="ADC50335.1"/>
    <property type="molecule type" value="Genomic_DNA"/>
</dbReference>
<dbReference type="EMBL" id="AF084104">
    <property type="protein sequence ID" value="AAC62412.1"/>
    <property type="molecule type" value="Genomic_DNA"/>
</dbReference>
<dbReference type="RefSeq" id="WP_012957701.1">
    <property type="nucleotide sequence ID" value="NC_013791.2"/>
</dbReference>
<dbReference type="SMR" id="O87567"/>
<dbReference type="STRING" id="398511.BpOF4_11410"/>
<dbReference type="KEGG" id="bpf:BpOF4_11410"/>
<dbReference type="eggNOG" id="COG0706">
    <property type="taxonomic scope" value="Bacteria"/>
</dbReference>
<dbReference type="HOGENOM" id="CLU_036138_5_0_9"/>
<dbReference type="Proteomes" id="UP000001544">
    <property type="component" value="Chromosome"/>
</dbReference>
<dbReference type="GO" id="GO:0005886">
    <property type="term" value="C:plasma membrane"/>
    <property type="evidence" value="ECO:0007669"/>
    <property type="project" value="UniProtKB-SubCell"/>
</dbReference>
<dbReference type="GO" id="GO:0032977">
    <property type="term" value="F:membrane insertase activity"/>
    <property type="evidence" value="ECO:0007669"/>
    <property type="project" value="InterPro"/>
</dbReference>
<dbReference type="GO" id="GO:0051205">
    <property type="term" value="P:protein insertion into membrane"/>
    <property type="evidence" value="ECO:0007669"/>
    <property type="project" value="TreeGrafter"/>
</dbReference>
<dbReference type="GO" id="GO:0015031">
    <property type="term" value="P:protein transport"/>
    <property type="evidence" value="ECO:0007669"/>
    <property type="project" value="UniProtKB-KW"/>
</dbReference>
<dbReference type="CDD" id="cd20070">
    <property type="entry name" value="5TM_YidC_Alb3"/>
    <property type="match status" value="1"/>
</dbReference>
<dbReference type="HAMAP" id="MF_01811">
    <property type="entry name" value="YidC_type2"/>
    <property type="match status" value="1"/>
</dbReference>
<dbReference type="InterPro" id="IPR001708">
    <property type="entry name" value="YidC/ALB3/OXA1/COX18"/>
</dbReference>
<dbReference type="InterPro" id="IPR028055">
    <property type="entry name" value="YidC/Oxa/ALB_C"/>
</dbReference>
<dbReference type="InterPro" id="IPR023060">
    <property type="entry name" value="YidC/YidC1/YidC2_Firmicutes"/>
</dbReference>
<dbReference type="InterPro" id="IPR047196">
    <property type="entry name" value="YidC_ALB_C"/>
</dbReference>
<dbReference type="NCBIfam" id="TIGR03592">
    <property type="entry name" value="yidC_oxa1_cterm"/>
    <property type="match status" value="1"/>
</dbReference>
<dbReference type="PANTHER" id="PTHR12428:SF65">
    <property type="entry name" value="CYTOCHROME C OXIDASE ASSEMBLY PROTEIN COX18, MITOCHONDRIAL"/>
    <property type="match status" value="1"/>
</dbReference>
<dbReference type="PANTHER" id="PTHR12428">
    <property type="entry name" value="OXA1"/>
    <property type="match status" value="1"/>
</dbReference>
<dbReference type="Pfam" id="PF02096">
    <property type="entry name" value="60KD_IMP"/>
    <property type="match status" value="1"/>
</dbReference>
<dbReference type="PRINTS" id="PR00701">
    <property type="entry name" value="60KDINNERMP"/>
</dbReference>
<dbReference type="PROSITE" id="PS51257">
    <property type="entry name" value="PROKAR_LIPOPROTEIN"/>
    <property type="match status" value="1"/>
</dbReference>